<dbReference type="EMBL" id="AF218013">
    <property type="protein sequence ID" value="AAG17255.1"/>
    <property type="molecule type" value="mRNA"/>
</dbReference>
<dbReference type="EMBL" id="AK025598">
    <property type="protein sequence ID" value="BAB15186.1"/>
    <property type="molecule type" value="mRNA"/>
</dbReference>
<dbReference type="EMBL" id="AC104665">
    <property type="protein sequence ID" value="AAY24115.1"/>
    <property type="molecule type" value="Genomic_DNA"/>
</dbReference>
<dbReference type="EMBL" id="CH471053">
    <property type="protein sequence ID" value="EAX00771.1"/>
    <property type="molecule type" value="Genomic_DNA"/>
</dbReference>
<dbReference type="EMBL" id="CH471053">
    <property type="protein sequence ID" value="EAX00772.1"/>
    <property type="molecule type" value="Genomic_DNA"/>
</dbReference>
<dbReference type="EMBL" id="BC035698">
    <property type="protein sequence ID" value="AAH35698.1"/>
    <property type="molecule type" value="mRNA"/>
</dbReference>
<dbReference type="CCDS" id="CCDS1705.1">
    <molecule id="Q9H6R7-1"/>
</dbReference>
<dbReference type="CCDS" id="CCDS46229.1">
    <molecule id="Q9H6R7-2"/>
</dbReference>
<dbReference type="RefSeq" id="NP_001135791.1">
    <molecule id="Q9H6R7-2"/>
    <property type="nucleotide sequence ID" value="NM_001142319.2"/>
</dbReference>
<dbReference type="RefSeq" id="NP_079479.1">
    <molecule id="Q9H6R7-1"/>
    <property type="nucleotide sequence ID" value="NM_025203.3"/>
</dbReference>
<dbReference type="BioGRID" id="123217">
    <property type="interactions" value="113"/>
</dbReference>
<dbReference type="FunCoup" id="Q9H6R7">
    <property type="interactions" value="1339"/>
</dbReference>
<dbReference type="IntAct" id="Q9H6R7">
    <property type="interactions" value="91"/>
</dbReference>
<dbReference type="MINT" id="Q9H6R7"/>
<dbReference type="STRING" id="9606.ENSP00000295148"/>
<dbReference type="GlyGen" id="Q9H6R7">
    <property type="glycosylation" value="2 sites, 1 O-linked glycan (2 sites)"/>
</dbReference>
<dbReference type="iPTMnet" id="Q9H6R7"/>
<dbReference type="PhosphoSitePlus" id="Q9H6R7"/>
<dbReference type="BioMuta" id="WDCP"/>
<dbReference type="DMDM" id="74752699"/>
<dbReference type="jPOST" id="Q9H6R7"/>
<dbReference type="MassIVE" id="Q9H6R7"/>
<dbReference type="PaxDb" id="9606-ENSP00000295148"/>
<dbReference type="PeptideAtlas" id="Q9H6R7"/>
<dbReference type="ProteomicsDB" id="81022">
    <molecule id="Q9H6R7-1"/>
</dbReference>
<dbReference type="ProteomicsDB" id="81023">
    <molecule id="Q9H6R7-2"/>
</dbReference>
<dbReference type="ProteomicsDB" id="81024">
    <molecule id="Q9H6R7-3"/>
</dbReference>
<dbReference type="Pumba" id="Q9H6R7"/>
<dbReference type="Antibodypedia" id="51026">
    <property type="antibodies" value="68 antibodies from 13 providers"/>
</dbReference>
<dbReference type="DNASU" id="80304"/>
<dbReference type="Ensembl" id="ENST00000295148.9">
    <molecule id="Q9H6R7-1"/>
    <property type="protein sequence ID" value="ENSP00000295148.4"/>
    <property type="gene ID" value="ENSG00000163026.12"/>
</dbReference>
<dbReference type="Ensembl" id="ENST00000406895.3">
    <molecule id="Q9H6R7-2"/>
    <property type="protein sequence ID" value="ENSP00000385816.3"/>
    <property type="gene ID" value="ENSG00000163026.12"/>
</dbReference>
<dbReference type="GeneID" id="80304"/>
<dbReference type="KEGG" id="hsa:80304"/>
<dbReference type="MANE-Select" id="ENST00000295148.9">
    <property type="protein sequence ID" value="ENSP00000295148.4"/>
    <property type="RefSeq nucleotide sequence ID" value="NM_025203.3"/>
    <property type="RefSeq protein sequence ID" value="NP_079479.1"/>
</dbReference>
<dbReference type="UCSC" id="uc002rep.3">
    <molecule id="Q9H6R7-1"/>
    <property type="organism name" value="human"/>
</dbReference>
<dbReference type="AGR" id="HGNC:26157"/>
<dbReference type="CTD" id="80304"/>
<dbReference type="DisGeNET" id="80304"/>
<dbReference type="GeneCards" id="WDCP"/>
<dbReference type="HGNC" id="HGNC:26157">
    <property type="gene designation" value="WDCP"/>
</dbReference>
<dbReference type="HPA" id="ENSG00000163026">
    <property type="expression patterns" value="Low tissue specificity"/>
</dbReference>
<dbReference type="MIM" id="616234">
    <property type="type" value="gene"/>
</dbReference>
<dbReference type="neXtProt" id="NX_Q9H6R7"/>
<dbReference type="OpenTargets" id="ENSG00000163026"/>
<dbReference type="PharmGKB" id="PA147358716"/>
<dbReference type="VEuPathDB" id="HostDB:ENSG00000163026"/>
<dbReference type="eggNOG" id="ENOG502QUUX">
    <property type="taxonomic scope" value="Eukaryota"/>
</dbReference>
<dbReference type="GeneTree" id="ENSGT00390000001660"/>
<dbReference type="HOGENOM" id="CLU_025195_0_0_1"/>
<dbReference type="InParanoid" id="Q9H6R7"/>
<dbReference type="OMA" id="DISEPYP"/>
<dbReference type="OrthoDB" id="6409262at2759"/>
<dbReference type="PAN-GO" id="Q9H6R7">
    <property type="GO annotations" value="1 GO annotation based on evolutionary models"/>
</dbReference>
<dbReference type="PhylomeDB" id="Q9H6R7"/>
<dbReference type="TreeFam" id="TF333528"/>
<dbReference type="PathwayCommons" id="Q9H6R7"/>
<dbReference type="Reactome" id="R-HSA-9725370">
    <property type="pathway name" value="Signaling by ALK fusions and activated point mutants"/>
</dbReference>
<dbReference type="SignaLink" id="Q9H6R7"/>
<dbReference type="SIGNOR" id="Q9H6R7"/>
<dbReference type="BioGRID-ORCS" id="80304">
    <property type="hits" value="20 hits in 1132 CRISPR screens"/>
</dbReference>
<dbReference type="GenomeRNAi" id="80304"/>
<dbReference type="Pharos" id="Q9H6R7">
    <property type="development level" value="Tdark"/>
</dbReference>
<dbReference type="PRO" id="PR:Q9H6R7"/>
<dbReference type="Proteomes" id="UP000005640">
    <property type="component" value="Chromosome 2"/>
</dbReference>
<dbReference type="RNAct" id="Q9H6R7">
    <property type="molecule type" value="protein"/>
</dbReference>
<dbReference type="Bgee" id="ENSG00000163026">
    <property type="expression patterns" value="Expressed in secondary oocyte and 113 other cell types or tissues"/>
</dbReference>
<dbReference type="ExpressionAtlas" id="Q9H6R7">
    <property type="expression patterns" value="baseline and differential"/>
</dbReference>
<dbReference type="GO" id="GO:0019900">
    <property type="term" value="F:kinase binding"/>
    <property type="evidence" value="ECO:0000353"/>
    <property type="project" value="UniProtKB"/>
</dbReference>
<dbReference type="GO" id="GO:0051259">
    <property type="term" value="P:protein complex oligomerization"/>
    <property type="evidence" value="ECO:0000314"/>
    <property type="project" value="UniProtKB"/>
</dbReference>
<dbReference type="InterPro" id="IPR028041">
    <property type="entry name" value="WDCP"/>
</dbReference>
<dbReference type="PANTHER" id="PTHR14897">
    <property type="entry name" value="WD REPEAT AND COILED-COIL-CONTAINING PROTEIN"/>
    <property type="match status" value="1"/>
</dbReference>
<dbReference type="PANTHER" id="PTHR14897:SF5">
    <property type="entry name" value="WD REPEAT AND COILED-COIL-CONTAINING PROTEIN"/>
    <property type="match status" value="1"/>
</dbReference>
<dbReference type="Pfam" id="PF15390">
    <property type="entry name" value="WDCP"/>
    <property type="match status" value="1"/>
</dbReference>
<dbReference type="SUPFAM" id="SSF69322">
    <property type="entry name" value="Tricorn protease domain 2"/>
    <property type="match status" value="1"/>
</dbReference>
<protein>
    <recommendedName>
        <fullName evidence="9">WD repeat and coiled-coil-containing protein</fullName>
    </recommendedName>
</protein>
<keyword id="KW-0007">Acetylation</keyword>
<keyword id="KW-0025">Alternative splicing</keyword>
<keyword id="KW-0160">Chromosomal rearrangement</keyword>
<keyword id="KW-0175">Coiled coil</keyword>
<keyword id="KW-0597">Phosphoprotein</keyword>
<keyword id="KW-1267">Proteomics identification</keyword>
<keyword id="KW-1185">Reference proteome</keyword>
<keyword id="KW-0677">Repeat</keyword>
<keyword id="KW-0853">WD repeat</keyword>
<feature type="chain" id="PRO_0000299501" description="WD repeat and coiled-coil-containing protein">
    <location>
        <begin position="1"/>
        <end position="721"/>
    </location>
</feature>
<feature type="repeat" description="WD 1">
    <location>
        <begin position="55"/>
        <end position="98"/>
    </location>
</feature>
<feature type="repeat" description="WD 2">
    <location>
        <begin position="154"/>
        <end position="194"/>
    </location>
</feature>
<feature type="region of interest" description="Disordered" evidence="2">
    <location>
        <begin position="520"/>
        <end position="553"/>
    </location>
</feature>
<feature type="region of interest" description="Interaction with HCK" evidence="6">
    <location>
        <begin position="539"/>
        <end position="545"/>
    </location>
</feature>
<feature type="coiled-coil region" evidence="1">
    <location>
        <begin position="556"/>
        <end position="584"/>
    </location>
</feature>
<feature type="compositionally biased region" description="Polar residues" evidence="2">
    <location>
        <begin position="520"/>
        <end position="537"/>
    </location>
</feature>
<feature type="modified residue" description="N-acetylmethionine" evidence="14">
    <location>
        <position position="1"/>
    </location>
</feature>
<feature type="modified residue" description="Phosphoserine" evidence="12 15">
    <location>
        <position position="299"/>
    </location>
</feature>
<feature type="modified residue" description="Phosphoserine" evidence="15">
    <location>
        <position position="468"/>
    </location>
</feature>
<feature type="modified residue" description="Phosphoserine" evidence="12">
    <location>
        <position position="501"/>
    </location>
</feature>
<feature type="modified residue" description="Phosphoserine" evidence="12">
    <location>
        <position position="523"/>
    </location>
</feature>
<feature type="modified residue" description="Phosphothreonine" evidence="15">
    <location>
        <position position="530"/>
    </location>
</feature>
<feature type="modified residue" description="Phosphoserine" evidence="15">
    <location>
        <position position="686"/>
    </location>
</feature>
<feature type="modified residue" description="Phosphoserine" evidence="11 13 15">
    <location>
        <position position="690"/>
    </location>
</feature>
<feature type="splice variant" id="VSP_027712" description="In isoform 3." evidence="8">
    <location>
        <begin position="1"/>
        <end position="487"/>
    </location>
</feature>
<feature type="splice variant" id="VSP_027715" description="In isoform 3." evidence="8">
    <original>N</original>
    <variation>M</variation>
    <location>
        <position position="488"/>
    </location>
</feature>
<feature type="splice variant" id="VSP_027713" description="In isoform 2." evidence="7">
    <original>KPYYLGPVVEKRAVLL</original>
    <variation>IPTGFFSLLTVRALSR</variation>
    <location>
        <begin position="607"/>
        <end position="622"/>
    </location>
</feature>
<feature type="splice variant" id="VSP_027714" description="In isoform 2." evidence="7">
    <location>
        <begin position="623"/>
        <end position="721"/>
    </location>
</feature>
<feature type="sequence variant" id="VAR_034834" description="In dbSNP:rs3731620.">
    <original>T</original>
    <variation>M</variation>
    <location>
        <position position="102"/>
    </location>
</feature>
<feature type="sequence variant" id="VAR_035876" description="In a breast cancer sample; somatic mutation." evidence="4">
    <original>P</original>
    <variation>S</variation>
    <location>
        <position position="454"/>
    </location>
</feature>
<feature type="mutagenesis site" description="Loss of interaction with HCK; when associated with P-543." evidence="6">
    <original>P</original>
    <variation>A</variation>
    <location>
        <position position="540"/>
    </location>
</feature>
<feature type="mutagenesis site" description="Loss of interaction with HCK; when associated with P-543." evidence="6">
    <original>P</original>
    <variation>A</variation>
    <location>
        <position position="543"/>
    </location>
</feature>
<reference key="1">
    <citation type="journal article" date="2015" name="Biomed. Rep.">
        <title>Molecular characterization of WDCP, a novel fusion partner for the anaplastic lymphoma tyrosine kinase ALK.</title>
        <authorList>
            <person name="Yokoyama N."/>
            <person name="Miller W.T."/>
        </authorList>
    </citation>
    <scope>NUCLEOTIDE SEQUENCE [MRNA]</scope>
    <scope>INTERACTION WITH HCK</scope>
    <scope>MUTAGENESIS OF PRO-540 AND PRO-543</scope>
</reference>
<reference key="2">
    <citation type="journal article" date="2004" name="Proc. Natl. Acad. Sci. U.S.A.">
        <title>Large-scale cDNA transfection screening for genes related to cancer development and progression.</title>
        <authorList>
            <person name="Wan D."/>
            <person name="Gong Y."/>
            <person name="Qin W."/>
            <person name="Zhang P."/>
            <person name="Li J."/>
            <person name="Wei L."/>
            <person name="Zhou X."/>
            <person name="Li H."/>
            <person name="Qiu X."/>
            <person name="Zhong F."/>
            <person name="He L."/>
            <person name="Yu J."/>
            <person name="Yao G."/>
            <person name="Jiang H."/>
            <person name="Qian L."/>
            <person name="Yu Y."/>
            <person name="Shu H."/>
            <person name="Chen X."/>
            <person name="Xu H."/>
            <person name="Guo M."/>
            <person name="Pan Z."/>
            <person name="Chen Y."/>
            <person name="Ge C."/>
            <person name="Yang S."/>
            <person name="Gu J."/>
        </authorList>
    </citation>
    <scope>NUCLEOTIDE SEQUENCE [LARGE SCALE MRNA] (ISOFORM 3)</scope>
</reference>
<reference key="3">
    <citation type="journal article" date="2004" name="Nat. Genet.">
        <title>Complete sequencing and characterization of 21,243 full-length human cDNAs.</title>
        <authorList>
            <person name="Ota T."/>
            <person name="Suzuki Y."/>
            <person name="Nishikawa T."/>
            <person name="Otsuki T."/>
            <person name="Sugiyama T."/>
            <person name="Irie R."/>
            <person name="Wakamatsu A."/>
            <person name="Hayashi K."/>
            <person name="Sato H."/>
            <person name="Nagai K."/>
            <person name="Kimura K."/>
            <person name="Makita H."/>
            <person name="Sekine M."/>
            <person name="Obayashi M."/>
            <person name="Nishi T."/>
            <person name="Shibahara T."/>
            <person name="Tanaka T."/>
            <person name="Ishii S."/>
            <person name="Yamamoto J."/>
            <person name="Saito K."/>
            <person name="Kawai Y."/>
            <person name="Isono Y."/>
            <person name="Nakamura Y."/>
            <person name="Nagahari K."/>
            <person name="Murakami K."/>
            <person name="Yasuda T."/>
            <person name="Iwayanagi T."/>
            <person name="Wagatsuma M."/>
            <person name="Shiratori A."/>
            <person name="Sudo H."/>
            <person name="Hosoiri T."/>
            <person name="Kaku Y."/>
            <person name="Kodaira H."/>
            <person name="Kondo H."/>
            <person name="Sugawara M."/>
            <person name="Takahashi M."/>
            <person name="Kanda K."/>
            <person name="Yokoi T."/>
            <person name="Furuya T."/>
            <person name="Kikkawa E."/>
            <person name="Omura Y."/>
            <person name="Abe K."/>
            <person name="Kamihara K."/>
            <person name="Katsuta N."/>
            <person name="Sato K."/>
            <person name="Tanikawa M."/>
            <person name="Yamazaki M."/>
            <person name="Ninomiya K."/>
            <person name="Ishibashi T."/>
            <person name="Yamashita H."/>
            <person name="Murakawa K."/>
            <person name="Fujimori K."/>
            <person name="Tanai H."/>
            <person name="Kimata M."/>
            <person name="Watanabe M."/>
            <person name="Hiraoka S."/>
            <person name="Chiba Y."/>
            <person name="Ishida S."/>
            <person name="Ono Y."/>
            <person name="Takiguchi S."/>
            <person name="Watanabe S."/>
            <person name="Yosida M."/>
            <person name="Hotuta T."/>
            <person name="Kusano J."/>
            <person name="Kanehori K."/>
            <person name="Takahashi-Fujii A."/>
            <person name="Hara H."/>
            <person name="Tanase T.-O."/>
            <person name="Nomura Y."/>
            <person name="Togiya S."/>
            <person name="Komai F."/>
            <person name="Hara R."/>
            <person name="Takeuchi K."/>
            <person name="Arita M."/>
            <person name="Imose N."/>
            <person name="Musashino K."/>
            <person name="Yuuki H."/>
            <person name="Oshima A."/>
            <person name="Sasaki N."/>
            <person name="Aotsuka S."/>
            <person name="Yoshikawa Y."/>
            <person name="Matsunawa H."/>
            <person name="Ichihara T."/>
            <person name="Shiohata N."/>
            <person name="Sano S."/>
            <person name="Moriya S."/>
            <person name="Momiyama H."/>
            <person name="Satoh N."/>
            <person name="Takami S."/>
            <person name="Terashima Y."/>
            <person name="Suzuki O."/>
            <person name="Nakagawa S."/>
            <person name="Senoh A."/>
            <person name="Mizoguchi H."/>
            <person name="Goto Y."/>
            <person name="Shimizu F."/>
            <person name="Wakebe H."/>
            <person name="Hishigaki H."/>
            <person name="Watanabe T."/>
            <person name="Sugiyama A."/>
            <person name="Takemoto M."/>
            <person name="Kawakami B."/>
            <person name="Yamazaki M."/>
            <person name="Watanabe K."/>
            <person name="Kumagai A."/>
            <person name="Itakura S."/>
            <person name="Fukuzumi Y."/>
            <person name="Fujimori Y."/>
            <person name="Komiyama M."/>
            <person name="Tashiro H."/>
            <person name="Tanigami A."/>
            <person name="Fujiwara T."/>
            <person name="Ono T."/>
            <person name="Yamada K."/>
            <person name="Fujii Y."/>
            <person name="Ozaki K."/>
            <person name="Hirao M."/>
            <person name="Ohmori Y."/>
            <person name="Kawabata A."/>
            <person name="Hikiji T."/>
            <person name="Kobatake N."/>
            <person name="Inagaki H."/>
            <person name="Ikema Y."/>
            <person name="Okamoto S."/>
            <person name="Okitani R."/>
            <person name="Kawakami T."/>
            <person name="Noguchi S."/>
            <person name="Itoh T."/>
            <person name="Shigeta K."/>
            <person name="Senba T."/>
            <person name="Matsumura K."/>
            <person name="Nakajima Y."/>
            <person name="Mizuno T."/>
            <person name="Morinaga M."/>
            <person name="Sasaki M."/>
            <person name="Togashi T."/>
            <person name="Oyama M."/>
            <person name="Hata H."/>
            <person name="Watanabe M."/>
            <person name="Komatsu T."/>
            <person name="Mizushima-Sugano J."/>
            <person name="Satoh T."/>
            <person name="Shirai Y."/>
            <person name="Takahashi Y."/>
            <person name="Nakagawa K."/>
            <person name="Okumura K."/>
            <person name="Nagase T."/>
            <person name="Nomura N."/>
            <person name="Kikuchi H."/>
            <person name="Masuho Y."/>
            <person name="Yamashita R."/>
            <person name="Nakai K."/>
            <person name="Yada T."/>
            <person name="Nakamura Y."/>
            <person name="Ohara O."/>
            <person name="Isogai T."/>
            <person name="Sugano S."/>
        </authorList>
    </citation>
    <scope>NUCLEOTIDE SEQUENCE [LARGE SCALE MRNA] (ISOFORM 1)</scope>
    <source>
        <tissue>Hepatoma</tissue>
    </source>
</reference>
<reference key="4">
    <citation type="journal article" date="2005" name="Nature">
        <title>Generation and annotation of the DNA sequences of human chromosomes 2 and 4.</title>
        <authorList>
            <person name="Hillier L.W."/>
            <person name="Graves T.A."/>
            <person name="Fulton R.S."/>
            <person name="Fulton L.A."/>
            <person name="Pepin K.H."/>
            <person name="Minx P."/>
            <person name="Wagner-McPherson C."/>
            <person name="Layman D."/>
            <person name="Wylie K."/>
            <person name="Sekhon M."/>
            <person name="Becker M.C."/>
            <person name="Fewell G.A."/>
            <person name="Delehaunty K.D."/>
            <person name="Miner T.L."/>
            <person name="Nash W.E."/>
            <person name="Kremitzki C."/>
            <person name="Oddy L."/>
            <person name="Du H."/>
            <person name="Sun H."/>
            <person name="Bradshaw-Cordum H."/>
            <person name="Ali J."/>
            <person name="Carter J."/>
            <person name="Cordes M."/>
            <person name="Harris A."/>
            <person name="Isak A."/>
            <person name="van Brunt A."/>
            <person name="Nguyen C."/>
            <person name="Du F."/>
            <person name="Courtney L."/>
            <person name="Kalicki J."/>
            <person name="Ozersky P."/>
            <person name="Abbott S."/>
            <person name="Armstrong J."/>
            <person name="Belter E.A."/>
            <person name="Caruso L."/>
            <person name="Cedroni M."/>
            <person name="Cotton M."/>
            <person name="Davidson T."/>
            <person name="Desai A."/>
            <person name="Elliott G."/>
            <person name="Erb T."/>
            <person name="Fronick C."/>
            <person name="Gaige T."/>
            <person name="Haakenson W."/>
            <person name="Haglund K."/>
            <person name="Holmes A."/>
            <person name="Harkins R."/>
            <person name="Kim K."/>
            <person name="Kruchowski S.S."/>
            <person name="Strong C.M."/>
            <person name="Grewal N."/>
            <person name="Goyea E."/>
            <person name="Hou S."/>
            <person name="Levy A."/>
            <person name="Martinka S."/>
            <person name="Mead K."/>
            <person name="McLellan M.D."/>
            <person name="Meyer R."/>
            <person name="Randall-Maher J."/>
            <person name="Tomlinson C."/>
            <person name="Dauphin-Kohlberg S."/>
            <person name="Kozlowicz-Reilly A."/>
            <person name="Shah N."/>
            <person name="Swearengen-Shahid S."/>
            <person name="Snider J."/>
            <person name="Strong J.T."/>
            <person name="Thompson J."/>
            <person name="Yoakum M."/>
            <person name="Leonard S."/>
            <person name="Pearman C."/>
            <person name="Trani L."/>
            <person name="Radionenko M."/>
            <person name="Waligorski J.E."/>
            <person name="Wang C."/>
            <person name="Rock S.M."/>
            <person name="Tin-Wollam A.-M."/>
            <person name="Maupin R."/>
            <person name="Latreille P."/>
            <person name="Wendl M.C."/>
            <person name="Yang S.-P."/>
            <person name="Pohl C."/>
            <person name="Wallis J.W."/>
            <person name="Spieth J."/>
            <person name="Bieri T.A."/>
            <person name="Berkowicz N."/>
            <person name="Nelson J.O."/>
            <person name="Osborne J."/>
            <person name="Ding L."/>
            <person name="Meyer R."/>
            <person name="Sabo A."/>
            <person name="Shotland Y."/>
            <person name="Sinha P."/>
            <person name="Wohldmann P.E."/>
            <person name="Cook L.L."/>
            <person name="Hickenbotham M.T."/>
            <person name="Eldred J."/>
            <person name="Williams D."/>
            <person name="Jones T.A."/>
            <person name="She X."/>
            <person name="Ciccarelli F.D."/>
            <person name="Izaurralde E."/>
            <person name="Taylor J."/>
            <person name="Schmutz J."/>
            <person name="Myers R.M."/>
            <person name="Cox D.R."/>
            <person name="Huang X."/>
            <person name="McPherson J.D."/>
            <person name="Mardis E.R."/>
            <person name="Clifton S.W."/>
            <person name="Warren W.C."/>
            <person name="Chinwalla A.T."/>
            <person name="Eddy S.R."/>
            <person name="Marra M.A."/>
            <person name="Ovcharenko I."/>
            <person name="Furey T.S."/>
            <person name="Miller W."/>
            <person name="Eichler E.E."/>
            <person name="Bork P."/>
            <person name="Suyama M."/>
            <person name="Torrents D."/>
            <person name="Waterston R.H."/>
            <person name="Wilson R.K."/>
        </authorList>
    </citation>
    <scope>NUCLEOTIDE SEQUENCE [LARGE SCALE GENOMIC DNA]</scope>
</reference>
<reference key="5">
    <citation type="submission" date="2005-09" db="EMBL/GenBank/DDBJ databases">
        <authorList>
            <person name="Mural R.J."/>
            <person name="Istrail S."/>
            <person name="Sutton G.G."/>
            <person name="Florea L."/>
            <person name="Halpern A.L."/>
            <person name="Mobarry C.M."/>
            <person name="Lippert R."/>
            <person name="Walenz B."/>
            <person name="Shatkay H."/>
            <person name="Dew I."/>
            <person name="Miller J.R."/>
            <person name="Flanigan M.J."/>
            <person name="Edwards N.J."/>
            <person name="Bolanos R."/>
            <person name="Fasulo D."/>
            <person name="Halldorsson B.V."/>
            <person name="Hannenhalli S."/>
            <person name="Turner R."/>
            <person name="Yooseph S."/>
            <person name="Lu F."/>
            <person name="Nusskern D.R."/>
            <person name="Shue B.C."/>
            <person name="Zheng X.H."/>
            <person name="Zhong F."/>
            <person name="Delcher A.L."/>
            <person name="Huson D.H."/>
            <person name="Kravitz S.A."/>
            <person name="Mouchard L."/>
            <person name="Reinert K."/>
            <person name="Remington K.A."/>
            <person name="Clark A.G."/>
            <person name="Waterman M.S."/>
            <person name="Eichler E.E."/>
            <person name="Adams M.D."/>
            <person name="Hunkapiller M.W."/>
            <person name="Myers E.W."/>
            <person name="Venter J.C."/>
        </authorList>
    </citation>
    <scope>NUCLEOTIDE SEQUENCE [LARGE SCALE GENOMIC DNA]</scope>
</reference>
<reference key="6">
    <citation type="submission" date="2006-12" db="EMBL/GenBank/DDBJ databases">
        <authorList>
            <person name="Mural R.J."/>
            <person name="Istrail S."/>
            <person name="Sutton G.G."/>
            <person name="Florea L."/>
            <person name="Halpern A.L."/>
            <person name="Mobarry C.M."/>
            <person name="Lippert R."/>
            <person name="Walenz B."/>
            <person name="Shatkay H."/>
            <person name="Dew I."/>
            <person name="Miller J.R."/>
            <person name="Flanigan M.J."/>
            <person name="Edwards N.J."/>
            <person name="Bolanos R."/>
            <person name="Fasulo D."/>
            <person name="Halldorsson B.V."/>
            <person name="Hannenhalli S."/>
            <person name="Turner R."/>
            <person name="Yooseph S."/>
            <person name="Lu F."/>
            <person name="Nusskern D.R."/>
            <person name="Shue B.C."/>
            <person name="Zheng X.H."/>
            <person name="Zhong F."/>
            <person name="Delcher A.L."/>
            <person name="Huson D.H."/>
            <person name="Kravitz S.A."/>
            <person name="Mouchard L."/>
            <person name="Reinert K."/>
            <person name="Remington K.A."/>
            <person name="Clark A.G."/>
            <person name="Waterman M.S."/>
            <person name="Eichler E.E."/>
            <person name="Adams M.D."/>
            <person name="Hunkapiller M.W."/>
            <person name="Myers E.W."/>
            <person name="Venter J.C."/>
        </authorList>
    </citation>
    <scope>NUCLEOTIDE SEQUENCE [LARGE SCALE GENOMIC DNA]</scope>
</reference>
<reference key="7">
    <citation type="journal article" date="2004" name="Genome Res.">
        <title>The status, quality, and expansion of the NIH full-length cDNA project: the Mammalian Gene Collection (MGC).</title>
        <authorList>
            <consortium name="The MGC Project Team"/>
        </authorList>
    </citation>
    <scope>NUCLEOTIDE SEQUENCE [LARGE SCALE MRNA] (ISOFORM 2)</scope>
    <source>
        <tissue>Eye</tissue>
    </source>
</reference>
<reference key="8">
    <citation type="journal article" date="2002" name="J. Biol. Chem.">
        <title>Identification of novel SH3 domain ligands for the Src family kinase Hck. Wiskott-Aldrich syndrome protein (WASP), WASP-interacting protein (WIP), and ELMO1.</title>
        <authorList>
            <person name="Scott M.P."/>
            <person name="Zappacosta F."/>
            <person name="Kim E.Y."/>
            <person name="Annan R.S."/>
            <person name="Miller W.T."/>
        </authorList>
    </citation>
    <scope>INTERACTION WITH HCK</scope>
    <scope>IDENTIFICATION BY MASS SPECTROMETRY</scope>
</reference>
<reference key="9">
    <citation type="journal article" date="2008" name="Mol. Cell">
        <title>Kinase-selective enrichment enables quantitative phosphoproteomics of the kinome across the cell cycle.</title>
        <authorList>
            <person name="Daub H."/>
            <person name="Olsen J.V."/>
            <person name="Bairlein M."/>
            <person name="Gnad F."/>
            <person name="Oppermann F.S."/>
            <person name="Korner R."/>
            <person name="Greff Z."/>
            <person name="Keri G."/>
            <person name="Stemmann O."/>
            <person name="Mann M."/>
        </authorList>
    </citation>
    <scope>PHOSPHORYLATION [LARGE SCALE ANALYSIS] AT SER-299; SER-501 AND SER-523</scope>
    <scope>IDENTIFICATION BY MASS SPECTROMETRY [LARGE SCALE ANALYSIS]</scope>
    <source>
        <tissue>Cervix carcinoma</tissue>
    </source>
</reference>
<reference key="10">
    <citation type="journal article" date="2008" name="Proc. Natl. Acad. Sci. U.S.A.">
        <title>A quantitative atlas of mitotic phosphorylation.</title>
        <authorList>
            <person name="Dephoure N."/>
            <person name="Zhou C."/>
            <person name="Villen J."/>
            <person name="Beausoleil S.A."/>
            <person name="Bakalarski C.E."/>
            <person name="Elledge S.J."/>
            <person name="Gygi S.P."/>
        </authorList>
    </citation>
    <scope>PHOSPHORYLATION [LARGE SCALE ANALYSIS] AT SER-690</scope>
    <scope>IDENTIFICATION BY MASS SPECTROMETRY [LARGE SCALE ANALYSIS]</scope>
    <source>
        <tissue>Cervix carcinoma</tissue>
    </source>
</reference>
<reference key="11">
    <citation type="journal article" date="2009" name="Sci. Signal.">
        <title>Quantitative phosphoproteomic analysis of T cell receptor signaling reveals system-wide modulation of protein-protein interactions.</title>
        <authorList>
            <person name="Mayya V."/>
            <person name="Lundgren D.H."/>
            <person name="Hwang S.-I."/>
            <person name="Rezaul K."/>
            <person name="Wu L."/>
            <person name="Eng J.K."/>
            <person name="Rodionov V."/>
            <person name="Han D.K."/>
        </authorList>
    </citation>
    <scope>PHOSPHORYLATION [LARGE SCALE ANALYSIS] AT SER-690</scope>
    <scope>IDENTIFICATION BY MASS SPECTROMETRY [LARGE SCALE ANALYSIS]</scope>
    <source>
        <tissue>Leukemic T-cell</tissue>
    </source>
</reference>
<reference key="12">
    <citation type="journal article" date="2011" name="Sci. Signal.">
        <title>System-wide temporal characterization of the proteome and phosphoproteome of human embryonic stem cell differentiation.</title>
        <authorList>
            <person name="Rigbolt K.T."/>
            <person name="Prokhorova T.A."/>
            <person name="Akimov V."/>
            <person name="Henningsen J."/>
            <person name="Johansen P.T."/>
            <person name="Kratchmarova I."/>
            <person name="Kassem M."/>
            <person name="Mann M."/>
            <person name="Olsen J.V."/>
            <person name="Blagoev B."/>
        </authorList>
    </citation>
    <scope>IDENTIFICATION BY MASS SPECTROMETRY [LARGE SCALE ANALYSIS]</scope>
</reference>
<reference key="13">
    <citation type="journal article" date="2012" name="Nat. Med.">
        <title>Identification of new ALK and RET gene fusions from colorectal and lung cancer biopsies.</title>
        <authorList>
            <person name="Lipson D."/>
            <person name="Capelletti M."/>
            <person name="Yelensky R."/>
            <person name="Otto G."/>
            <person name="Parker A."/>
            <person name="Jarosz M."/>
            <person name="Curran J.A."/>
            <person name="Balasubramanian S."/>
            <person name="Bloom T."/>
            <person name="Brennan K.W."/>
            <person name="Donahue A."/>
            <person name="Downing S.R."/>
            <person name="Frampton G.M."/>
            <person name="Garcia L."/>
            <person name="Juhn F."/>
            <person name="Mitchell K.C."/>
            <person name="White E."/>
            <person name="White J."/>
            <person name="Zwirko Z."/>
            <person name="Peretz T."/>
            <person name="Nechushtan H."/>
            <person name="Soussan-Gutman L."/>
            <person name="Kim J."/>
            <person name="Sasaki H."/>
            <person name="Kim H.R."/>
            <person name="Park S.I."/>
            <person name="Ercan D."/>
            <person name="Sheehan C.E."/>
            <person name="Ross J.S."/>
            <person name="Cronin M.T."/>
            <person name="Jaenne P.A."/>
            <person name="Stephens P.J."/>
        </authorList>
    </citation>
    <scope>CHROMOSOMAL TRANSLOCATION WITH ALK</scope>
</reference>
<reference key="14">
    <citation type="journal article" date="2012" name="Proc. Natl. Acad. Sci. U.S.A.">
        <title>N-terminal acetylome analyses and functional insights of the N-terminal acetyltransferase NatB.</title>
        <authorList>
            <person name="Van Damme P."/>
            <person name="Lasa M."/>
            <person name="Polevoda B."/>
            <person name="Gazquez C."/>
            <person name="Elosegui-Artola A."/>
            <person name="Kim D.S."/>
            <person name="De Juan-Pardo E."/>
            <person name="Demeyer K."/>
            <person name="Hole K."/>
            <person name="Larrea E."/>
            <person name="Timmerman E."/>
            <person name="Prieto J."/>
            <person name="Arnesen T."/>
            <person name="Sherman F."/>
            <person name="Gevaert K."/>
            <person name="Aldabe R."/>
        </authorList>
    </citation>
    <scope>ACETYLATION [LARGE SCALE ANALYSIS] AT MET-1</scope>
    <scope>IDENTIFICATION BY MASS SPECTROMETRY [LARGE SCALE ANALYSIS]</scope>
</reference>
<reference key="15">
    <citation type="journal article" date="2013" name="J. Proteome Res.">
        <title>Toward a comprehensive characterization of a human cancer cell phosphoproteome.</title>
        <authorList>
            <person name="Zhou H."/>
            <person name="Di Palma S."/>
            <person name="Preisinger C."/>
            <person name="Peng M."/>
            <person name="Polat A.N."/>
            <person name="Heck A.J."/>
            <person name="Mohammed S."/>
        </authorList>
    </citation>
    <scope>PHOSPHORYLATION [LARGE SCALE ANALYSIS] AT SER-299; SER-468; THR-530; SER-686 AND SER-690</scope>
    <scope>IDENTIFICATION BY MASS SPECTROMETRY [LARGE SCALE ANALYSIS]</scope>
    <source>
        <tissue>Cervix carcinoma</tissue>
        <tissue>Erythroleukemia</tissue>
    </source>
</reference>
<reference key="16">
    <citation type="journal article" date="2006" name="Science">
        <title>The consensus coding sequences of human breast and colorectal cancers.</title>
        <authorList>
            <person name="Sjoeblom T."/>
            <person name="Jones S."/>
            <person name="Wood L.D."/>
            <person name="Parsons D.W."/>
            <person name="Lin J."/>
            <person name="Barber T.D."/>
            <person name="Mandelker D."/>
            <person name="Leary R.J."/>
            <person name="Ptak J."/>
            <person name="Silliman N."/>
            <person name="Szabo S."/>
            <person name="Buckhaults P."/>
            <person name="Farrell C."/>
            <person name="Meeh P."/>
            <person name="Markowitz S.D."/>
            <person name="Willis J."/>
            <person name="Dawson D."/>
            <person name="Willson J.K.V."/>
            <person name="Gazdar A.F."/>
            <person name="Hartigan J."/>
            <person name="Wu L."/>
            <person name="Liu C."/>
            <person name="Parmigiani G."/>
            <person name="Park B.H."/>
            <person name="Bachman K.E."/>
            <person name="Papadopoulos N."/>
            <person name="Vogelstein B."/>
            <person name="Kinzler K.W."/>
            <person name="Velculescu V.E."/>
        </authorList>
    </citation>
    <scope>VARIANT [LARGE SCALE ANALYSIS] SER-454</scope>
</reference>
<evidence type="ECO:0000255" key="1"/>
<evidence type="ECO:0000256" key="2">
    <source>
        <dbReference type="SAM" id="MobiDB-lite"/>
    </source>
</evidence>
<evidence type="ECO:0000269" key="3">
    <source>
    </source>
</evidence>
<evidence type="ECO:0000269" key="4">
    <source>
    </source>
</evidence>
<evidence type="ECO:0000269" key="5">
    <source>
    </source>
</evidence>
<evidence type="ECO:0000269" key="6">
    <source>
    </source>
</evidence>
<evidence type="ECO:0000303" key="7">
    <source>
    </source>
</evidence>
<evidence type="ECO:0000303" key="8">
    <source>
    </source>
</evidence>
<evidence type="ECO:0000305" key="9"/>
<evidence type="ECO:0000312" key="10">
    <source>
        <dbReference type="HGNC" id="HGNC:26157"/>
    </source>
</evidence>
<evidence type="ECO:0007744" key="11">
    <source>
    </source>
</evidence>
<evidence type="ECO:0007744" key="12">
    <source>
    </source>
</evidence>
<evidence type="ECO:0007744" key="13">
    <source>
    </source>
</evidence>
<evidence type="ECO:0007744" key="14">
    <source>
    </source>
</evidence>
<evidence type="ECO:0007744" key="15">
    <source>
    </source>
</evidence>
<comment type="subunit">
    <text evidence="3 6">Oligomer. Interacts with HCK (via SH3 domain).</text>
</comment>
<comment type="interaction">
    <interactant intactId="EBI-25833271">
        <id>Q9H6R7-2</id>
    </interactant>
    <interactant intactId="EBI-12275524">
        <id>P23560-2</id>
        <label>BDNF</label>
    </interactant>
    <organismsDiffer>false</organismsDiffer>
    <experiments>3</experiments>
</comment>
<comment type="interaction">
    <interactant intactId="EBI-25833271">
        <id>Q9H6R7-2</id>
    </interactant>
    <interactant intactId="EBI-296047">
        <id>P07900</id>
        <label>HSP90AA1</label>
    </interactant>
    <organismsDiffer>false</organismsDiffer>
    <experiments>3</experiments>
</comment>
<comment type="alternative products">
    <event type="alternative splicing"/>
    <isoform>
        <id>Q9H6R7-1</id>
        <name>1</name>
        <sequence type="displayed"/>
    </isoform>
    <isoform>
        <id>Q9H6R7-2</id>
        <name>2</name>
        <sequence type="described" ref="VSP_027713 VSP_027714"/>
    </isoform>
    <isoform>
        <id>Q9H6R7-3</id>
        <name>3</name>
        <sequence type="described" ref="VSP_027712 VSP_027715"/>
    </isoform>
</comment>
<comment type="PTM">
    <text evidence="6">Phosphorylated on Tyr when associated with HCK.</text>
</comment>
<comment type="disease">
    <text evidence="5">A chromosomal aberration involving WDCP is found in one subject with colorectal cancer. Translocation t(2;2)(p23.3;p23.1). A 5 million base pair tandem duplication generates an in-frame WDCP-ALK gene fusion.</text>
</comment>
<name>WDCP_HUMAN</name>
<proteinExistence type="evidence at protein level"/>
<sequence length="721" mass="79136">MELGKGKLLRTGLNALHQAVHPIHGLAWTDGNQVVLTDLRLHSGEVKFGDSKVIGQFECVCGLSWAPPVADDTPVLLAVQHEKHVTVWQLCPSPMESSKWLTSQTCEIRGSLPILPQGCVWHPKCAILTVLTAQDVSIFPNVHSDDSQVKADINTQGRIHCACWTQDGLRLVVAVGSSLHSYIWDSAQKTLHRCSSCLVFDVDSHVCSITATVDSQVAIATELPLDKICGLNASETFNIPPNSKDMTPYALPVIGEVRSMDKEATDSETNSEVSVSSSYLEPLDLTHIHFNQHKSEGNSLICLRKKDYLTGTGQDSSHLVLVTFKKAVTMTRKVTIPGILVPDLIAFNLKAHVVAVASNTCNIILIYSVIPSSVPNIQQIRLENTERPKGICFLTDQLLLILVGKQKLTDTTFLPSSKSDQYAISLIVREIMLEEEPSITSGESQTTYSTFSAPLNKANRKKLIESLSPDFCHQNKGLLLTVNTSSQNGRPGRTLIKEIQSPLSSICDGSIALDAEPVTQPASLPRHSSTPDHTSTLEPPRLPQRKNLQSEKETYQLSKEVEILSRNLVEMQRCLSELTNRLHNGKKSSSVYPLSQDLPYVHIIYQKPYYLGPVVEKRAVLLCDGKLRLSTVQQTFGLSLIEMLHDSHWILLSADSEGFIPLTFTATQEIIIRDGSLSRSDVFRDSFSHSPGAVSSLKVFTGLAAPSLDTTGCCNHVDGMA</sequence>
<accession>Q9H6R7</accession>
<accession>D6W532</accession>
<accession>Q8IYK0</accession>
<accession>Q9HBP5</accession>
<organism>
    <name type="scientific">Homo sapiens</name>
    <name type="common">Human</name>
    <dbReference type="NCBI Taxonomy" id="9606"/>
    <lineage>
        <taxon>Eukaryota</taxon>
        <taxon>Metazoa</taxon>
        <taxon>Chordata</taxon>
        <taxon>Craniata</taxon>
        <taxon>Vertebrata</taxon>
        <taxon>Euteleostomi</taxon>
        <taxon>Mammalia</taxon>
        <taxon>Eutheria</taxon>
        <taxon>Euarchontoglires</taxon>
        <taxon>Primates</taxon>
        <taxon>Haplorrhini</taxon>
        <taxon>Catarrhini</taxon>
        <taxon>Hominidae</taxon>
        <taxon>Homo</taxon>
    </lineage>
</organism>
<gene>
    <name evidence="10" type="primary">WDCP</name>
    <name type="synonym">C2orf44</name>
    <name type="ORF">PP384</name>
</gene>